<comment type="function">
    <text evidence="1">Catalyzes the reversible transfer of the terminal phosphate group between ATP and AMP. Plays an important role in cellular energy homeostasis and in adenine nucleotide metabolism.</text>
</comment>
<comment type="catalytic activity">
    <reaction evidence="1">
        <text>AMP + ATP = 2 ADP</text>
        <dbReference type="Rhea" id="RHEA:12973"/>
        <dbReference type="ChEBI" id="CHEBI:30616"/>
        <dbReference type="ChEBI" id="CHEBI:456215"/>
        <dbReference type="ChEBI" id="CHEBI:456216"/>
        <dbReference type="EC" id="2.7.4.3"/>
    </reaction>
</comment>
<comment type="pathway">
    <text evidence="1">Purine metabolism; AMP biosynthesis via salvage pathway; AMP from ADP: step 1/1.</text>
</comment>
<comment type="subunit">
    <text evidence="1">Monomer.</text>
</comment>
<comment type="subcellular location">
    <subcellularLocation>
        <location evidence="1">Cytoplasm</location>
    </subcellularLocation>
</comment>
<comment type="domain">
    <text evidence="1">Consists of three domains, a large central CORE domain and two small peripheral domains, NMPbind and LID, which undergo movements during catalysis. The LID domain closes over the site of phosphoryl transfer upon ATP binding. Assembling and dissambling the active center during each catalytic cycle provides an effective means to prevent ATP hydrolysis.</text>
</comment>
<comment type="similarity">
    <text evidence="1">Belongs to the adenylate kinase family.</text>
</comment>
<proteinExistence type="inferred from homology"/>
<protein>
    <recommendedName>
        <fullName evidence="1">Adenylate kinase</fullName>
        <shortName evidence="1">AK</shortName>
        <ecNumber evidence="1">2.7.4.3</ecNumber>
    </recommendedName>
    <alternativeName>
        <fullName evidence="1">ATP-AMP transphosphorylase</fullName>
    </alternativeName>
    <alternativeName>
        <fullName evidence="1">ATP:AMP phosphotransferase</fullName>
    </alternativeName>
    <alternativeName>
        <fullName evidence="1">Adenylate monophosphate kinase</fullName>
    </alternativeName>
</protein>
<evidence type="ECO:0000255" key="1">
    <source>
        <dbReference type="HAMAP-Rule" id="MF_00235"/>
    </source>
</evidence>
<name>KAD_BORPA</name>
<organism>
    <name type="scientific">Bordetella parapertussis (strain 12822 / ATCC BAA-587 / NCTC 13253)</name>
    <dbReference type="NCBI Taxonomy" id="257311"/>
    <lineage>
        <taxon>Bacteria</taxon>
        <taxon>Pseudomonadati</taxon>
        <taxon>Pseudomonadota</taxon>
        <taxon>Betaproteobacteria</taxon>
        <taxon>Burkholderiales</taxon>
        <taxon>Alcaligenaceae</taxon>
        <taxon>Bordetella</taxon>
    </lineage>
</organism>
<sequence>MRLILLGPPGAGKGTQAAFLTQHYGIPQISTGNMLRAAVKAGTPLGLEAKKVMDAGGLVSDDLIIGLVRDRLTQPDCANGYLFDGFPRTIPQADALKSAGIALDYVVEIEVPESDIIERMSGRRVHPASGRSYHVRFNPPKAEGVDDVTGEPLVQRDDDREETVRHRLNVYQNQTRPLVDYYSSWAQSDAAAAPKYRKISGVGSVDEIKSRLSQALQS</sequence>
<reference key="1">
    <citation type="journal article" date="2003" name="Nat. Genet.">
        <title>Comparative analysis of the genome sequences of Bordetella pertussis, Bordetella parapertussis and Bordetella bronchiseptica.</title>
        <authorList>
            <person name="Parkhill J."/>
            <person name="Sebaihia M."/>
            <person name="Preston A."/>
            <person name="Murphy L.D."/>
            <person name="Thomson N.R."/>
            <person name="Harris D.E."/>
            <person name="Holden M.T.G."/>
            <person name="Churcher C.M."/>
            <person name="Bentley S.D."/>
            <person name="Mungall K.L."/>
            <person name="Cerdeno-Tarraga A.-M."/>
            <person name="Temple L."/>
            <person name="James K.D."/>
            <person name="Harris B."/>
            <person name="Quail M.A."/>
            <person name="Achtman M."/>
            <person name="Atkin R."/>
            <person name="Baker S."/>
            <person name="Basham D."/>
            <person name="Bason N."/>
            <person name="Cherevach I."/>
            <person name="Chillingworth T."/>
            <person name="Collins M."/>
            <person name="Cronin A."/>
            <person name="Davis P."/>
            <person name="Doggett J."/>
            <person name="Feltwell T."/>
            <person name="Goble A."/>
            <person name="Hamlin N."/>
            <person name="Hauser H."/>
            <person name="Holroyd S."/>
            <person name="Jagels K."/>
            <person name="Leather S."/>
            <person name="Moule S."/>
            <person name="Norberczak H."/>
            <person name="O'Neil S."/>
            <person name="Ormond D."/>
            <person name="Price C."/>
            <person name="Rabbinowitsch E."/>
            <person name="Rutter S."/>
            <person name="Sanders M."/>
            <person name="Saunders D."/>
            <person name="Seeger K."/>
            <person name="Sharp S."/>
            <person name="Simmonds M."/>
            <person name="Skelton J."/>
            <person name="Squares R."/>
            <person name="Squares S."/>
            <person name="Stevens K."/>
            <person name="Unwin L."/>
            <person name="Whitehead S."/>
            <person name="Barrell B.G."/>
            <person name="Maskell D.J."/>
        </authorList>
    </citation>
    <scope>NUCLEOTIDE SEQUENCE [LARGE SCALE GENOMIC DNA]</scope>
    <source>
        <strain>12822 / ATCC BAA-587 / NCTC 13253</strain>
    </source>
</reference>
<dbReference type="EC" id="2.7.4.3" evidence="1"/>
<dbReference type="EMBL" id="BX640430">
    <property type="protein sequence ID" value="CAE37854.1"/>
    <property type="molecule type" value="Genomic_DNA"/>
</dbReference>
<dbReference type="RefSeq" id="WP_010928604.1">
    <property type="nucleotide sequence ID" value="NC_002928.3"/>
</dbReference>
<dbReference type="SMR" id="Q7W7G0"/>
<dbReference type="GeneID" id="93204347"/>
<dbReference type="KEGG" id="bpa:BPP2560"/>
<dbReference type="HOGENOM" id="CLU_032354_1_2_4"/>
<dbReference type="UniPathway" id="UPA00588">
    <property type="reaction ID" value="UER00649"/>
</dbReference>
<dbReference type="Proteomes" id="UP000001421">
    <property type="component" value="Chromosome"/>
</dbReference>
<dbReference type="GO" id="GO:0005737">
    <property type="term" value="C:cytoplasm"/>
    <property type="evidence" value="ECO:0007669"/>
    <property type="project" value="UniProtKB-SubCell"/>
</dbReference>
<dbReference type="GO" id="GO:0004017">
    <property type="term" value="F:adenylate kinase activity"/>
    <property type="evidence" value="ECO:0007669"/>
    <property type="project" value="UniProtKB-UniRule"/>
</dbReference>
<dbReference type="GO" id="GO:0005524">
    <property type="term" value="F:ATP binding"/>
    <property type="evidence" value="ECO:0007669"/>
    <property type="project" value="UniProtKB-UniRule"/>
</dbReference>
<dbReference type="GO" id="GO:0044209">
    <property type="term" value="P:AMP salvage"/>
    <property type="evidence" value="ECO:0007669"/>
    <property type="project" value="UniProtKB-UniRule"/>
</dbReference>
<dbReference type="CDD" id="cd01428">
    <property type="entry name" value="ADK"/>
    <property type="match status" value="1"/>
</dbReference>
<dbReference type="FunFam" id="3.40.50.300:FF:000106">
    <property type="entry name" value="Adenylate kinase mitochondrial"/>
    <property type="match status" value="1"/>
</dbReference>
<dbReference type="Gene3D" id="3.40.50.300">
    <property type="entry name" value="P-loop containing nucleotide triphosphate hydrolases"/>
    <property type="match status" value="1"/>
</dbReference>
<dbReference type="HAMAP" id="MF_00235">
    <property type="entry name" value="Adenylate_kinase_Adk"/>
    <property type="match status" value="1"/>
</dbReference>
<dbReference type="InterPro" id="IPR006259">
    <property type="entry name" value="Adenyl_kin_sub"/>
</dbReference>
<dbReference type="InterPro" id="IPR000850">
    <property type="entry name" value="Adenylat/UMP-CMP_kin"/>
</dbReference>
<dbReference type="InterPro" id="IPR033690">
    <property type="entry name" value="Adenylat_kinase_CS"/>
</dbReference>
<dbReference type="InterPro" id="IPR007862">
    <property type="entry name" value="Adenylate_kinase_lid-dom"/>
</dbReference>
<dbReference type="InterPro" id="IPR027417">
    <property type="entry name" value="P-loop_NTPase"/>
</dbReference>
<dbReference type="NCBIfam" id="TIGR01351">
    <property type="entry name" value="adk"/>
    <property type="match status" value="1"/>
</dbReference>
<dbReference type="NCBIfam" id="NF001379">
    <property type="entry name" value="PRK00279.1-1"/>
    <property type="match status" value="1"/>
</dbReference>
<dbReference type="NCBIfam" id="NF001380">
    <property type="entry name" value="PRK00279.1-2"/>
    <property type="match status" value="1"/>
</dbReference>
<dbReference type="NCBIfam" id="NF001381">
    <property type="entry name" value="PRK00279.1-3"/>
    <property type="match status" value="1"/>
</dbReference>
<dbReference type="NCBIfam" id="NF011100">
    <property type="entry name" value="PRK14527.1"/>
    <property type="match status" value="1"/>
</dbReference>
<dbReference type="PANTHER" id="PTHR23359">
    <property type="entry name" value="NUCLEOTIDE KINASE"/>
    <property type="match status" value="1"/>
</dbReference>
<dbReference type="Pfam" id="PF00406">
    <property type="entry name" value="ADK"/>
    <property type="match status" value="1"/>
</dbReference>
<dbReference type="Pfam" id="PF05191">
    <property type="entry name" value="ADK_lid"/>
    <property type="match status" value="1"/>
</dbReference>
<dbReference type="PRINTS" id="PR00094">
    <property type="entry name" value="ADENYLTKNASE"/>
</dbReference>
<dbReference type="SUPFAM" id="SSF52540">
    <property type="entry name" value="P-loop containing nucleoside triphosphate hydrolases"/>
    <property type="match status" value="1"/>
</dbReference>
<dbReference type="PROSITE" id="PS00113">
    <property type="entry name" value="ADENYLATE_KINASE"/>
    <property type="match status" value="1"/>
</dbReference>
<gene>
    <name evidence="1" type="primary">adk</name>
    <name type="ordered locus">BPP2560</name>
</gene>
<feature type="chain" id="PRO_0000158739" description="Adenylate kinase">
    <location>
        <begin position="1"/>
        <end position="218"/>
    </location>
</feature>
<feature type="region of interest" description="NMP" evidence="1">
    <location>
        <begin position="30"/>
        <end position="59"/>
    </location>
</feature>
<feature type="region of interest" description="LID" evidence="1">
    <location>
        <begin position="122"/>
        <end position="159"/>
    </location>
</feature>
<feature type="binding site" evidence="1">
    <location>
        <begin position="10"/>
        <end position="15"/>
    </location>
    <ligand>
        <name>ATP</name>
        <dbReference type="ChEBI" id="CHEBI:30616"/>
    </ligand>
</feature>
<feature type="binding site" evidence="1">
    <location>
        <position position="31"/>
    </location>
    <ligand>
        <name>AMP</name>
        <dbReference type="ChEBI" id="CHEBI:456215"/>
    </ligand>
</feature>
<feature type="binding site" evidence="1">
    <location>
        <position position="36"/>
    </location>
    <ligand>
        <name>AMP</name>
        <dbReference type="ChEBI" id="CHEBI:456215"/>
    </ligand>
</feature>
<feature type="binding site" evidence="1">
    <location>
        <begin position="57"/>
        <end position="59"/>
    </location>
    <ligand>
        <name>AMP</name>
        <dbReference type="ChEBI" id="CHEBI:456215"/>
    </ligand>
</feature>
<feature type="binding site" evidence="1">
    <location>
        <begin position="85"/>
        <end position="88"/>
    </location>
    <ligand>
        <name>AMP</name>
        <dbReference type="ChEBI" id="CHEBI:456215"/>
    </ligand>
</feature>
<feature type="binding site" evidence="1">
    <location>
        <position position="92"/>
    </location>
    <ligand>
        <name>AMP</name>
        <dbReference type="ChEBI" id="CHEBI:456215"/>
    </ligand>
</feature>
<feature type="binding site" evidence="1">
    <location>
        <position position="123"/>
    </location>
    <ligand>
        <name>ATP</name>
        <dbReference type="ChEBI" id="CHEBI:30616"/>
    </ligand>
</feature>
<feature type="binding site" evidence="1">
    <location>
        <begin position="132"/>
        <end position="133"/>
    </location>
    <ligand>
        <name>ATP</name>
        <dbReference type="ChEBI" id="CHEBI:30616"/>
    </ligand>
</feature>
<feature type="binding site" evidence="1">
    <location>
        <position position="156"/>
    </location>
    <ligand>
        <name>AMP</name>
        <dbReference type="ChEBI" id="CHEBI:456215"/>
    </ligand>
</feature>
<feature type="binding site" evidence="1">
    <location>
        <position position="167"/>
    </location>
    <ligand>
        <name>AMP</name>
        <dbReference type="ChEBI" id="CHEBI:456215"/>
    </ligand>
</feature>
<feature type="binding site" evidence="1">
    <location>
        <position position="203"/>
    </location>
    <ligand>
        <name>ATP</name>
        <dbReference type="ChEBI" id="CHEBI:30616"/>
    </ligand>
</feature>
<accession>Q7W7G0</accession>
<keyword id="KW-0067">ATP-binding</keyword>
<keyword id="KW-0963">Cytoplasm</keyword>
<keyword id="KW-0418">Kinase</keyword>
<keyword id="KW-0545">Nucleotide biosynthesis</keyword>
<keyword id="KW-0547">Nucleotide-binding</keyword>
<keyword id="KW-0808">Transferase</keyword>